<protein>
    <recommendedName>
        <fullName>Zinc finger CCHC domain-containing protein 10</fullName>
    </recommendedName>
</protein>
<sequence>MATPMHRLIARRQAFDTELQPVKTFWILIQPSIVISEANKQHVRCQKCLEFGHWTYECTGKRKYLHRPSRTAELKKALKEKENRLLLQQSIGETNVERKAKKKRSKSVTSSSSSSSDSSASDSSSESEETSTSSSSEDSDTDESSSSSSSSASSTTSSSSSDSDSDSSSSSSSSTSTDSSSDDEPPKKKKKK</sequence>
<organism>
    <name type="scientific">Homo sapiens</name>
    <name type="common">Human</name>
    <dbReference type="NCBI Taxonomy" id="9606"/>
    <lineage>
        <taxon>Eukaryota</taxon>
        <taxon>Metazoa</taxon>
        <taxon>Chordata</taxon>
        <taxon>Craniata</taxon>
        <taxon>Vertebrata</taxon>
        <taxon>Euteleostomi</taxon>
        <taxon>Mammalia</taxon>
        <taxon>Eutheria</taxon>
        <taxon>Euarchontoglires</taxon>
        <taxon>Primates</taxon>
        <taxon>Haplorrhini</taxon>
        <taxon>Catarrhini</taxon>
        <taxon>Hominidae</taxon>
        <taxon>Homo</taxon>
    </lineage>
</organism>
<comment type="interaction">
    <interactant intactId="EBI-597063">
        <id>Q8TBK6</id>
    </interactant>
    <interactant intactId="EBI-12170453">
        <id>Q8N2N9-4</id>
        <label>ANKRD36B</label>
    </interactant>
    <organismsDiffer>false</organismsDiffer>
    <experiments>3</experiments>
</comment>
<comment type="interaction">
    <interactant intactId="EBI-597063">
        <id>Q8TBK6</id>
    </interactant>
    <interactant intactId="EBI-10181188">
        <id>Q8N7W2-2</id>
        <label>BEND7</label>
    </interactant>
    <organismsDiffer>false</organismsDiffer>
    <experiments>3</experiments>
</comment>
<comment type="interaction">
    <interactant intactId="EBI-597063">
        <id>Q8TBK6</id>
    </interactant>
    <interactant intactId="EBI-2559016">
        <id>Q6NZI2</id>
        <label>CAVIN1</label>
    </interactant>
    <organismsDiffer>false</organismsDiffer>
    <experiments>4</experiments>
</comment>
<comment type="interaction">
    <interactant intactId="EBI-597063">
        <id>Q8TBK6</id>
    </interactant>
    <interactant intactId="EBI-741977">
        <id>Q96MT8</id>
        <label>CEP63</label>
    </interactant>
    <organismsDiffer>false</organismsDiffer>
    <experiments>3</experiments>
</comment>
<comment type="interaction">
    <interactant intactId="EBI-597063">
        <id>Q8TBK6</id>
    </interactant>
    <interactant intactId="EBI-739624">
        <id>Q8NHQ1</id>
        <label>CEP70</label>
    </interactant>
    <organismsDiffer>false</organismsDiffer>
    <experiments>4</experiments>
</comment>
<comment type="interaction">
    <interactant intactId="EBI-597063">
        <id>Q8TBK6</id>
    </interactant>
    <interactant intactId="EBI-945751">
        <id>P38432</id>
        <label>COIL</label>
    </interactant>
    <organismsDiffer>false</organismsDiffer>
    <experiments>3</experiments>
</comment>
<comment type="interaction">
    <interactant intactId="EBI-597063">
        <id>Q8TBK6</id>
    </interactant>
    <interactant intactId="EBI-7875264">
        <id>O75553</id>
        <label>DAB1</label>
    </interactant>
    <organismsDiffer>false</organismsDiffer>
    <experiments>3</experiments>
</comment>
<comment type="interaction">
    <interactant intactId="EBI-597063">
        <id>Q8TBK6</id>
    </interactant>
    <interactant intactId="EBI-10186082">
        <id>Q9UI36-2</id>
        <label>DACH1</label>
    </interactant>
    <organismsDiffer>false</organismsDiffer>
    <experiments>3</experiments>
</comment>
<comment type="interaction">
    <interactant intactId="EBI-597063">
        <id>Q8TBK6</id>
    </interactant>
    <interactant intactId="EBI-948630">
        <id>Q86Y13</id>
        <label>DZIP3</label>
    </interactant>
    <organismsDiffer>false</organismsDiffer>
    <experiments>6</experiments>
</comment>
<comment type="interaction">
    <interactant intactId="EBI-597063">
        <id>Q8TBK6</id>
    </interactant>
    <interactant intactId="EBI-741705">
        <id>Q8IYF1</id>
        <label>ELOA2</label>
    </interactant>
    <organismsDiffer>false</organismsDiffer>
    <experiments>3</experiments>
</comment>
<comment type="interaction">
    <interactant intactId="EBI-597063">
        <id>Q8TBK6</id>
    </interactant>
    <interactant intactId="EBI-10197451">
        <id>P11171-2</id>
        <label>EPB41</label>
    </interactant>
    <organismsDiffer>false</organismsDiffer>
    <experiments>3</experiments>
</comment>
<comment type="interaction">
    <interactant intactId="EBI-597063">
        <id>Q8TBK6</id>
    </interactant>
    <interactant intactId="EBI-10175124">
        <id>Q8IZU0</id>
        <label>FAM9B</label>
    </interactant>
    <organismsDiffer>false</organismsDiffer>
    <experiments>3</experiments>
</comment>
<comment type="interaction">
    <interactant intactId="EBI-597063">
        <id>Q8TBK6</id>
    </interactant>
    <interactant intactId="EBI-743722">
        <id>Q5VSY0</id>
        <label>GKAP1</label>
    </interactant>
    <organismsDiffer>false</organismsDiffer>
    <experiments>3</experiments>
</comment>
<comment type="interaction">
    <interactant intactId="EBI-597063">
        <id>Q8TBK6</id>
    </interactant>
    <interactant intactId="EBI-7261162">
        <id>Q9UGU5</id>
        <label>HMGXB4</label>
    </interactant>
    <organismsDiffer>false</organismsDiffer>
    <experiments>5</experiments>
</comment>
<comment type="interaction">
    <interactant intactId="EBI-597063">
        <id>Q8TBK6</id>
    </interactant>
    <interactant intactId="EBI-2511344">
        <id>Q8NC69</id>
        <label>KCTD6</label>
    </interactant>
    <organismsDiffer>false</organismsDiffer>
    <experiments>3</experiments>
</comment>
<comment type="interaction">
    <interactant intactId="EBI-597063">
        <id>Q8TBK6</id>
    </interactant>
    <interactant intactId="EBI-358297">
        <id>O00505</id>
        <label>KPNA3</label>
    </interactant>
    <organismsDiffer>false</organismsDiffer>
    <experiments>3</experiments>
</comment>
<comment type="interaction">
    <interactant intactId="EBI-597063">
        <id>Q8TBK6</id>
    </interactant>
    <interactant intactId="EBI-739832">
        <id>Q8TBB1</id>
        <label>LNX1</label>
    </interactant>
    <organismsDiffer>false</organismsDiffer>
    <experiments>3</experiments>
</comment>
<comment type="interaction">
    <interactant intactId="EBI-597063">
        <id>Q8TBK6</id>
    </interactant>
    <interactant intactId="EBI-10268010">
        <id>Q8N8X9</id>
        <label>MAB21L3</label>
    </interactant>
    <organismsDiffer>false</organismsDiffer>
    <experiments>3</experiments>
</comment>
<comment type="interaction">
    <interactant intactId="EBI-597063">
        <id>Q8TBK6</id>
    </interactant>
    <interactant intactId="EBI-348259">
        <id>Q96EZ8</id>
        <label>MCRS1</label>
    </interactant>
    <organismsDiffer>false</organismsDiffer>
    <experiments>4</experiments>
</comment>
<comment type="interaction">
    <interactant intactId="EBI-597063">
        <id>Q8TBK6</id>
    </interactant>
    <interactant intactId="EBI-2864512">
        <id>P50221</id>
        <label>MEOX1</label>
    </interactant>
    <organismsDiffer>false</organismsDiffer>
    <experiments>3</experiments>
</comment>
<comment type="interaction">
    <interactant intactId="EBI-597063">
        <id>Q8TBK6</id>
    </interactant>
    <interactant intactId="EBI-536866">
        <id>O95848</id>
        <label>NUDT14</label>
    </interactant>
    <organismsDiffer>false</organismsDiffer>
    <experiments>3</experiments>
</comment>
<comment type="interaction">
    <interactant intactId="EBI-597063">
        <id>Q8TBK6</id>
    </interactant>
    <interactant intactId="EBI-473291">
        <id>O75400</id>
        <label>PRPF40A</label>
    </interactant>
    <organismsDiffer>false</organismsDiffer>
    <experiments>3</experiments>
</comment>
<comment type="interaction">
    <interactant intactId="EBI-597063">
        <id>Q8TBK6</id>
    </interactant>
    <interactant intactId="EBI-740924">
        <id>Q9NZ81</id>
        <label>PRR13</label>
    </interactant>
    <organismsDiffer>false</organismsDiffer>
    <experiments>4</experiments>
</comment>
<comment type="interaction">
    <interactant intactId="EBI-597063">
        <id>Q8TBK6</id>
    </interactant>
    <interactant intactId="EBI-355546">
        <id>P61289</id>
        <label>PSME3</label>
    </interactant>
    <organismsDiffer>false</organismsDiffer>
    <experiments>7</experiments>
</comment>
<comment type="interaction">
    <interactant intactId="EBI-597063">
        <id>Q8TBK6</id>
    </interactant>
    <interactant intactId="EBI-1047946">
        <id>P26045</id>
        <label>PTPN3</label>
    </interactant>
    <organismsDiffer>false</organismsDiffer>
    <experiments>3</experiments>
</comment>
<comment type="interaction">
    <interactant intactId="EBI-597063">
        <id>Q8TBK6</id>
    </interactant>
    <interactant intactId="EBI-395290">
        <id>Q14498</id>
        <label>RBM39</label>
    </interactant>
    <organismsDiffer>false</organismsDiffer>
    <experiments>4</experiments>
</comment>
<comment type="interaction">
    <interactant intactId="EBI-597063">
        <id>Q8TBK6</id>
    </interactant>
    <interactant intactId="EBI-6654703">
        <id>Q14498-3</id>
        <label>RBM39</label>
    </interactant>
    <organismsDiffer>false</organismsDiffer>
    <experiments>3</experiments>
</comment>
<comment type="interaction">
    <interactant intactId="EBI-597063">
        <id>Q8TBK6</id>
    </interactant>
    <interactant intactId="EBI-354533">
        <id>P35268</id>
        <label>RPL22</label>
    </interactant>
    <organismsDiffer>false</organismsDiffer>
    <experiments>3</experiments>
</comment>
<comment type="interaction">
    <interactant intactId="EBI-597063">
        <id>Q8TBK6</id>
    </interactant>
    <interactant intactId="EBI-727004">
        <id>O00560</id>
        <label>SDCBP</label>
    </interactant>
    <organismsDiffer>false</organismsDiffer>
    <experiments>3</experiments>
</comment>
<comment type="interaction">
    <interactant intactId="EBI-597063">
        <id>Q8TBK6</id>
    </interactant>
    <interactant intactId="EBI-742426">
        <id>Q9H190</id>
        <label>SDCBP2</label>
    </interactant>
    <organismsDiffer>false</organismsDiffer>
    <experiments>4</experiments>
</comment>
<comment type="interaction">
    <interactant intactId="EBI-597063">
        <id>Q8TBK6</id>
    </interactant>
    <interactant intactId="EBI-348469">
        <id>Q15427</id>
        <label>SF3B4</label>
    </interactant>
    <organismsDiffer>false</organismsDiffer>
    <experiments>3</experiments>
</comment>
<comment type="interaction">
    <interactant intactId="EBI-597063">
        <id>Q8TBK6</id>
    </interactant>
    <interactant intactId="EBI-747398">
        <id>Q9UHJ3</id>
        <label>SFMBT1</label>
    </interactant>
    <organismsDiffer>false</organismsDiffer>
    <experiments>6</experiments>
</comment>
<comment type="interaction">
    <interactant intactId="EBI-597063">
        <id>Q8TBK6</id>
    </interactant>
    <interactant intactId="EBI-747107">
        <id>Q8IUQ4</id>
        <label>SIAH1</label>
    </interactant>
    <organismsDiffer>false</organismsDiffer>
    <experiments>3</experiments>
</comment>
<comment type="interaction">
    <interactant intactId="EBI-597063">
        <id>Q8TBK6</id>
    </interactant>
    <interactant intactId="EBI-745680">
        <id>Q96MF2</id>
        <label>STAC3</label>
    </interactant>
    <organismsDiffer>false</organismsDiffer>
    <experiments>7</experiments>
</comment>
<comment type="interaction">
    <interactant intactId="EBI-597063">
        <id>Q8TBK6</id>
    </interactant>
    <interactant intactId="EBI-714135">
        <id>O75558</id>
        <label>STX11</label>
    </interactant>
    <organismsDiffer>false</organismsDiffer>
    <experiments>4</experiments>
</comment>
<comment type="interaction">
    <interactant intactId="EBI-597063">
        <id>Q8TBK6</id>
    </interactant>
    <interactant intactId="EBI-717422">
        <id>Q12800</id>
        <label>TFCP2</label>
    </interactant>
    <organismsDiffer>false</organismsDiffer>
    <experiments>4</experiments>
</comment>
<comment type="interaction">
    <interactant intactId="EBI-597063">
        <id>Q8TBK6</id>
    </interactant>
    <interactant intactId="EBI-741515">
        <id>Q9NVV9</id>
        <label>THAP1</label>
    </interactant>
    <organismsDiffer>false</organismsDiffer>
    <experiments>10</experiments>
</comment>
<comment type="interaction">
    <interactant intactId="EBI-597063">
        <id>Q8TBK6</id>
    </interactant>
    <interactant intactId="EBI-10176632">
        <id>O43829</id>
        <label>ZBTB14</label>
    </interactant>
    <organismsDiffer>false</organismsDiffer>
    <experiments>3</experiments>
</comment>
<comment type="interaction">
    <interactant intactId="EBI-597063">
        <id>Q8TBK6</id>
    </interactant>
    <interactant intactId="EBI-742740">
        <id>Q96BR9</id>
        <label>ZBTB8A</label>
    </interactant>
    <organismsDiffer>false</organismsDiffer>
    <experiments>3</experiments>
</comment>
<comment type="interaction">
    <interactant intactId="EBI-597063">
        <id>Q8TBK6</id>
    </interactant>
    <interactant intactId="EBI-26359852">
        <id>Q5ZXN6</id>
        <label>ankX</label>
    </interactant>
    <organismsDiffer>true</organismsDiffer>
    <experiments>2</experiments>
</comment>
<comment type="alternative products">
    <event type="alternative splicing"/>
    <isoform>
        <id>Q8TBK6-1</id>
        <name>1</name>
        <sequence type="displayed"/>
    </isoform>
    <isoform>
        <id>Q8TBK6-2</id>
        <name>2</name>
        <sequence type="described" ref="VSP_013718"/>
    </isoform>
</comment>
<keyword id="KW-0025">Alternative splicing</keyword>
<keyword id="KW-0479">Metal-binding</keyword>
<keyword id="KW-1267">Proteomics identification</keyword>
<keyword id="KW-1185">Reference proteome</keyword>
<keyword id="KW-0862">Zinc</keyword>
<keyword id="KW-0863">Zinc-finger</keyword>
<dbReference type="EMBL" id="AK000101">
    <property type="protein sequence ID" value="BAA90946.1"/>
    <property type="molecule type" value="mRNA"/>
</dbReference>
<dbReference type="EMBL" id="BC005211">
    <property type="protein sequence ID" value="AAH05211.1"/>
    <property type="molecule type" value="mRNA"/>
</dbReference>
<dbReference type="EMBL" id="BC022443">
    <property type="protein sequence ID" value="AAH22443.1"/>
    <property type="molecule type" value="mRNA"/>
</dbReference>
<dbReference type="CCDS" id="CCDS4165.1">
    <molecule id="Q8TBK6-2"/>
</dbReference>
<dbReference type="CCDS" id="CCDS75301.1">
    <molecule id="Q8TBK6-1"/>
</dbReference>
<dbReference type="RefSeq" id="NP_001287745.1">
    <molecule id="Q8TBK6-1"/>
    <property type="nucleotide sequence ID" value="NM_001300816.3"/>
</dbReference>
<dbReference type="RefSeq" id="NP_001287746.1">
    <property type="nucleotide sequence ID" value="NM_001300817.2"/>
</dbReference>
<dbReference type="RefSeq" id="NP_001287747.1">
    <property type="nucleotide sequence ID" value="NM_001300818.2"/>
</dbReference>
<dbReference type="RefSeq" id="NP_001287748.1">
    <property type="nucleotide sequence ID" value="NM_001300819.2"/>
</dbReference>
<dbReference type="RefSeq" id="NP_001287751.1">
    <property type="nucleotide sequence ID" value="NM_001300822.2"/>
</dbReference>
<dbReference type="RefSeq" id="NP_001295056.1">
    <property type="nucleotide sequence ID" value="NM_001308127.1"/>
</dbReference>
<dbReference type="RefSeq" id="NP_001295057.1">
    <property type="nucleotide sequence ID" value="NM_001308128.1"/>
</dbReference>
<dbReference type="RefSeq" id="NP_001295058.1">
    <property type="nucleotide sequence ID" value="NM_001308129.1"/>
</dbReference>
<dbReference type="RefSeq" id="NP_001295059.1">
    <property type="nucleotide sequence ID" value="NM_001308130.1"/>
</dbReference>
<dbReference type="RefSeq" id="NP_060135.1">
    <molecule id="Q8TBK6-2"/>
    <property type="nucleotide sequence ID" value="NM_017665.4"/>
</dbReference>
<dbReference type="BioGRID" id="120174">
    <property type="interactions" value="239"/>
</dbReference>
<dbReference type="FunCoup" id="Q8TBK6">
    <property type="interactions" value="116"/>
</dbReference>
<dbReference type="IntAct" id="Q8TBK6">
    <property type="interactions" value="232"/>
</dbReference>
<dbReference type="MINT" id="Q8TBK6"/>
<dbReference type="STRING" id="9606.ENSP00000423276"/>
<dbReference type="iPTMnet" id="Q8TBK6"/>
<dbReference type="PhosphoSitePlus" id="Q8TBK6"/>
<dbReference type="BioMuta" id="ZCCHC10"/>
<dbReference type="DMDM" id="84028163"/>
<dbReference type="jPOST" id="Q8TBK6"/>
<dbReference type="MassIVE" id="Q8TBK6"/>
<dbReference type="PaxDb" id="9606-ENSP00000423276"/>
<dbReference type="PeptideAtlas" id="Q8TBK6"/>
<dbReference type="ProteomicsDB" id="74024">
    <molecule id="Q8TBK6-1"/>
</dbReference>
<dbReference type="ProteomicsDB" id="74025">
    <molecule id="Q8TBK6-2"/>
</dbReference>
<dbReference type="Pumba" id="Q8TBK6"/>
<dbReference type="Antibodypedia" id="26217">
    <property type="antibodies" value="26 antibodies from 12 providers"/>
</dbReference>
<dbReference type="DNASU" id="54819"/>
<dbReference type="Ensembl" id="ENST00000324170.7">
    <molecule id="Q8TBK6-2"/>
    <property type="protein sequence ID" value="ENSP00000324274.3"/>
    <property type="gene ID" value="ENSG00000155329.12"/>
</dbReference>
<dbReference type="Ensembl" id="ENST00000509437.6">
    <molecule id="Q8TBK6-1"/>
    <property type="protein sequence ID" value="ENSP00000423276.1"/>
    <property type="gene ID" value="ENSG00000155329.12"/>
</dbReference>
<dbReference type="GeneID" id="54819"/>
<dbReference type="KEGG" id="hsa:54819"/>
<dbReference type="MANE-Select" id="ENST00000509437.6">
    <property type="protein sequence ID" value="ENSP00000423276.1"/>
    <property type="RefSeq nucleotide sequence ID" value="NM_001300816.3"/>
    <property type="RefSeq protein sequence ID" value="NP_001287745.1"/>
</dbReference>
<dbReference type="UCSC" id="uc003kyg.4">
    <molecule id="Q8TBK6-1"/>
    <property type="organism name" value="human"/>
</dbReference>
<dbReference type="AGR" id="HGNC:25954"/>
<dbReference type="CTD" id="54819"/>
<dbReference type="DisGeNET" id="54819"/>
<dbReference type="GeneCards" id="ZCCHC10"/>
<dbReference type="HGNC" id="HGNC:25954">
    <property type="gene designation" value="ZCCHC10"/>
</dbReference>
<dbReference type="HPA" id="ENSG00000155329">
    <property type="expression patterns" value="Low tissue specificity"/>
</dbReference>
<dbReference type="neXtProt" id="NX_Q8TBK6"/>
<dbReference type="OpenTargets" id="ENSG00000155329"/>
<dbReference type="PharmGKB" id="PA134876515"/>
<dbReference type="VEuPathDB" id="HostDB:ENSG00000155329"/>
<dbReference type="eggNOG" id="KOG3116">
    <property type="taxonomic scope" value="Eukaryota"/>
</dbReference>
<dbReference type="GeneTree" id="ENSGT00730000111200"/>
<dbReference type="HOGENOM" id="CLU_111178_0_0_1"/>
<dbReference type="InParanoid" id="Q8TBK6"/>
<dbReference type="OMA" id="SRTMQFK"/>
<dbReference type="OrthoDB" id="437973at2759"/>
<dbReference type="PAN-GO" id="Q8TBK6">
    <property type="GO annotations" value="0 GO annotations based on evolutionary models"/>
</dbReference>
<dbReference type="PhylomeDB" id="Q8TBK6"/>
<dbReference type="PathwayCommons" id="Q8TBK6"/>
<dbReference type="SignaLink" id="Q8TBK6"/>
<dbReference type="BioGRID-ORCS" id="54819">
    <property type="hits" value="17 hits in 1155 CRISPR screens"/>
</dbReference>
<dbReference type="ChiTaRS" id="ZCCHC10">
    <property type="organism name" value="human"/>
</dbReference>
<dbReference type="GenomeRNAi" id="54819"/>
<dbReference type="Pharos" id="Q8TBK6">
    <property type="development level" value="Tdark"/>
</dbReference>
<dbReference type="PRO" id="PR:Q8TBK6"/>
<dbReference type="Proteomes" id="UP000005640">
    <property type="component" value="Chromosome 5"/>
</dbReference>
<dbReference type="RNAct" id="Q8TBK6">
    <property type="molecule type" value="protein"/>
</dbReference>
<dbReference type="Bgee" id="ENSG00000155329">
    <property type="expression patterns" value="Expressed in endothelial cell and 208 other cell types or tissues"/>
</dbReference>
<dbReference type="ExpressionAtlas" id="Q8TBK6">
    <property type="expression patterns" value="baseline and differential"/>
</dbReference>
<dbReference type="GO" id="GO:0003676">
    <property type="term" value="F:nucleic acid binding"/>
    <property type="evidence" value="ECO:0007669"/>
    <property type="project" value="InterPro"/>
</dbReference>
<dbReference type="GO" id="GO:0008270">
    <property type="term" value="F:zinc ion binding"/>
    <property type="evidence" value="ECO:0007669"/>
    <property type="project" value="UniProtKB-KW"/>
</dbReference>
<dbReference type="InterPro" id="IPR039715">
    <property type="entry name" value="ZCCHC10"/>
</dbReference>
<dbReference type="InterPro" id="IPR036875">
    <property type="entry name" value="Znf_CCHC_sf"/>
</dbReference>
<dbReference type="PANTHER" id="PTHR13491">
    <property type="entry name" value="ZCCHC10 PROTEIN"/>
    <property type="match status" value="1"/>
</dbReference>
<dbReference type="PANTHER" id="PTHR13491:SF0">
    <property type="entry name" value="ZINC FINGER CCHC DOMAIN-CONTAINING PROTEIN 10"/>
    <property type="match status" value="1"/>
</dbReference>
<dbReference type="Pfam" id="PF13917">
    <property type="entry name" value="zf-CCHC_3"/>
    <property type="match status" value="1"/>
</dbReference>
<dbReference type="SUPFAM" id="SSF57756">
    <property type="entry name" value="Retrovirus zinc finger-like domains"/>
    <property type="match status" value="1"/>
</dbReference>
<evidence type="ECO:0000256" key="1">
    <source>
        <dbReference type="SAM" id="MobiDB-lite"/>
    </source>
</evidence>
<evidence type="ECO:0000303" key="2">
    <source>
    </source>
</evidence>
<evidence type="ECO:0000303" key="3">
    <source>
    </source>
</evidence>
<accession>Q8TBK6</accession>
<accession>Q9NXR4</accession>
<reference key="1">
    <citation type="journal article" date="2004" name="Nat. Genet.">
        <title>Complete sequencing and characterization of 21,243 full-length human cDNAs.</title>
        <authorList>
            <person name="Ota T."/>
            <person name="Suzuki Y."/>
            <person name="Nishikawa T."/>
            <person name="Otsuki T."/>
            <person name="Sugiyama T."/>
            <person name="Irie R."/>
            <person name="Wakamatsu A."/>
            <person name="Hayashi K."/>
            <person name="Sato H."/>
            <person name="Nagai K."/>
            <person name="Kimura K."/>
            <person name="Makita H."/>
            <person name="Sekine M."/>
            <person name="Obayashi M."/>
            <person name="Nishi T."/>
            <person name="Shibahara T."/>
            <person name="Tanaka T."/>
            <person name="Ishii S."/>
            <person name="Yamamoto J."/>
            <person name="Saito K."/>
            <person name="Kawai Y."/>
            <person name="Isono Y."/>
            <person name="Nakamura Y."/>
            <person name="Nagahari K."/>
            <person name="Murakami K."/>
            <person name="Yasuda T."/>
            <person name="Iwayanagi T."/>
            <person name="Wagatsuma M."/>
            <person name="Shiratori A."/>
            <person name="Sudo H."/>
            <person name="Hosoiri T."/>
            <person name="Kaku Y."/>
            <person name="Kodaira H."/>
            <person name="Kondo H."/>
            <person name="Sugawara M."/>
            <person name="Takahashi M."/>
            <person name="Kanda K."/>
            <person name="Yokoi T."/>
            <person name="Furuya T."/>
            <person name="Kikkawa E."/>
            <person name="Omura Y."/>
            <person name="Abe K."/>
            <person name="Kamihara K."/>
            <person name="Katsuta N."/>
            <person name="Sato K."/>
            <person name="Tanikawa M."/>
            <person name="Yamazaki M."/>
            <person name="Ninomiya K."/>
            <person name="Ishibashi T."/>
            <person name="Yamashita H."/>
            <person name="Murakawa K."/>
            <person name="Fujimori K."/>
            <person name="Tanai H."/>
            <person name="Kimata M."/>
            <person name="Watanabe M."/>
            <person name="Hiraoka S."/>
            <person name="Chiba Y."/>
            <person name="Ishida S."/>
            <person name="Ono Y."/>
            <person name="Takiguchi S."/>
            <person name="Watanabe S."/>
            <person name="Yosida M."/>
            <person name="Hotuta T."/>
            <person name="Kusano J."/>
            <person name="Kanehori K."/>
            <person name="Takahashi-Fujii A."/>
            <person name="Hara H."/>
            <person name="Tanase T.-O."/>
            <person name="Nomura Y."/>
            <person name="Togiya S."/>
            <person name="Komai F."/>
            <person name="Hara R."/>
            <person name="Takeuchi K."/>
            <person name="Arita M."/>
            <person name="Imose N."/>
            <person name="Musashino K."/>
            <person name="Yuuki H."/>
            <person name="Oshima A."/>
            <person name="Sasaki N."/>
            <person name="Aotsuka S."/>
            <person name="Yoshikawa Y."/>
            <person name="Matsunawa H."/>
            <person name="Ichihara T."/>
            <person name="Shiohata N."/>
            <person name="Sano S."/>
            <person name="Moriya S."/>
            <person name="Momiyama H."/>
            <person name="Satoh N."/>
            <person name="Takami S."/>
            <person name="Terashima Y."/>
            <person name="Suzuki O."/>
            <person name="Nakagawa S."/>
            <person name="Senoh A."/>
            <person name="Mizoguchi H."/>
            <person name="Goto Y."/>
            <person name="Shimizu F."/>
            <person name="Wakebe H."/>
            <person name="Hishigaki H."/>
            <person name="Watanabe T."/>
            <person name="Sugiyama A."/>
            <person name="Takemoto M."/>
            <person name="Kawakami B."/>
            <person name="Yamazaki M."/>
            <person name="Watanabe K."/>
            <person name="Kumagai A."/>
            <person name="Itakura S."/>
            <person name="Fukuzumi Y."/>
            <person name="Fujimori Y."/>
            <person name="Komiyama M."/>
            <person name="Tashiro H."/>
            <person name="Tanigami A."/>
            <person name="Fujiwara T."/>
            <person name="Ono T."/>
            <person name="Yamada K."/>
            <person name="Fujii Y."/>
            <person name="Ozaki K."/>
            <person name="Hirao M."/>
            <person name="Ohmori Y."/>
            <person name="Kawabata A."/>
            <person name="Hikiji T."/>
            <person name="Kobatake N."/>
            <person name="Inagaki H."/>
            <person name="Ikema Y."/>
            <person name="Okamoto S."/>
            <person name="Okitani R."/>
            <person name="Kawakami T."/>
            <person name="Noguchi S."/>
            <person name="Itoh T."/>
            <person name="Shigeta K."/>
            <person name="Senba T."/>
            <person name="Matsumura K."/>
            <person name="Nakajima Y."/>
            <person name="Mizuno T."/>
            <person name="Morinaga M."/>
            <person name="Sasaki M."/>
            <person name="Togashi T."/>
            <person name="Oyama M."/>
            <person name="Hata H."/>
            <person name="Watanabe M."/>
            <person name="Komatsu T."/>
            <person name="Mizushima-Sugano J."/>
            <person name="Satoh T."/>
            <person name="Shirai Y."/>
            <person name="Takahashi Y."/>
            <person name="Nakagawa K."/>
            <person name="Okumura K."/>
            <person name="Nagase T."/>
            <person name="Nomura N."/>
            <person name="Kikuchi H."/>
            <person name="Masuho Y."/>
            <person name="Yamashita R."/>
            <person name="Nakai K."/>
            <person name="Yada T."/>
            <person name="Nakamura Y."/>
            <person name="Ohara O."/>
            <person name="Isogai T."/>
            <person name="Sugano S."/>
        </authorList>
    </citation>
    <scope>NUCLEOTIDE SEQUENCE [LARGE SCALE MRNA] (ISOFORM 2)</scope>
    <source>
        <tissue>Colon</tissue>
    </source>
</reference>
<reference key="2">
    <citation type="journal article" date="2004" name="Genome Res.">
        <title>The status, quality, and expansion of the NIH full-length cDNA project: the Mammalian Gene Collection (MGC).</title>
        <authorList>
            <consortium name="The MGC Project Team"/>
        </authorList>
    </citation>
    <scope>NUCLEOTIDE SEQUENCE [LARGE SCALE MRNA] (ISOFORMS 1 AND 2)</scope>
    <source>
        <tissue>Brain</tissue>
    </source>
</reference>
<proteinExistence type="evidence at protein level"/>
<gene>
    <name type="primary">ZCCHC10</name>
</gene>
<name>ZCH10_HUMAN</name>
<feature type="chain" id="PRO_0000150967" description="Zinc finger CCHC domain-containing protein 10">
    <location>
        <begin position="1"/>
        <end position="192"/>
    </location>
</feature>
<feature type="zinc finger region" description="CCHC-type">
    <location>
        <begin position="43"/>
        <end position="60"/>
    </location>
</feature>
<feature type="region of interest" description="Disordered" evidence="1">
    <location>
        <begin position="89"/>
        <end position="192"/>
    </location>
</feature>
<feature type="compositionally biased region" description="Low complexity" evidence="1">
    <location>
        <begin position="109"/>
        <end position="136"/>
    </location>
</feature>
<feature type="compositionally biased region" description="Low complexity" evidence="1">
    <location>
        <begin position="144"/>
        <end position="179"/>
    </location>
</feature>
<feature type="splice variant" id="VSP_013718" description="In isoform 2." evidence="2 3">
    <location>
        <begin position="15"/>
        <end position="36"/>
    </location>
</feature>